<proteinExistence type="inferred from homology"/>
<protein>
    <recommendedName>
        <fullName evidence="1">D-ribose pyranase</fullName>
        <ecNumber evidence="1">5.4.99.62</ecNumber>
    </recommendedName>
</protein>
<gene>
    <name evidence="1" type="primary">rbsD</name>
    <name type="ordered locus">EAT1b_1518</name>
</gene>
<reference key="1">
    <citation type="journal article" date="2011" name="J. Bacteriol.">
        <title>Complete genome sequence of the Thermophilic Bacterium Exiguobacterium sp. AT1b.</title>
        <authorList>
            <person name="Vishnivetskaya T.A."/>
            <person name="Lucas S."/>
            <person name="Copeland A."/>
            <person name="Lapidus A."/>
            <person name="Glavina del Rio T."/>
            <person name="Dalin E."/>
            <person name="Tice H."/>
            <person name="Bruce D.C."/>
            <person name="Goodwin L.A."/>
            <person name="Pitluck S."/>
            <person name="Saunders E."/>
            <person name="Brettin T."/>
            <person name="Detter C."/>
            <person name="Han C."/>
            <person name="Larimer F."/>
            <person name="Land M.L."/>
            <person name="Hauser L.J."/>
            <person name="Kyrpides N.C."/>
            <person name="Ovchinnikova G."/>
            <person name="Kathariou S."/>
            <person name="Ramaley R.F."/>
            <person name="Rodrigues D.F."/>
            <person name="Hendrix C."/>
            <person name="Richardson P."/>
            <person name="Tiedje J.M."/>
        </authorList>
    </citation>
    <scope>NUCLEOTIDE SEQUENCE [LARGE SCALE GENOMIC DNA]</scope>
    <source>
        <strain>ATCC BAA-1283 / AT1b</strain>
    </source>
</reference>
<feature type="chain" id="PRO_1000215866" description="D-ribose pyranase">
    <location>
        <begin position="1"/>
        <end position="129"/>
    </location>
</feature>
<feature type="active site" description="Proton donor" evidence="1">
    <location>
        <position position="20"/>
    </location>
</feature>
<feature type="binding site" evidence="1">
    <location>
        <position position="28"/>
    </location>
    <ligand>
        <name>substrate</name>
    </ligand>
</feature>
<feature type="binding site" evidence="1">
    <location>
        <position position="96"/>
    </location>
    <ligand>
        <name>substrate</name>
    </ligand>
</feature>
<feature type="binding site" evidence="1">
    <location>
        <begin position="118"/>
        <end position="120"/>
    </location>
    <ligand>
        <name>substrate</name>
    </ligand>
</feature>
<comment type="function">
    <text evidence="1">Catalyzes the interconversion of beta-pyran and beta-furan forms of D-ribose.</text>
</comment>
<comment type="catalytic activity">
    <reaction evidence="1">
        <text>beta-D-ribopyranose = beta-D-ribofuranose</text>
        <dbReference type="Rhea" id="RHEA:25432"/>
        <dbReference type="ChEBI" id="CHEBI:27476"/>
        <dbReference type="ChEBI" id="CHEBI:47002"/>
        <dbReference type="EC" id="5.4.99.62"/>
    </reaction>
</comment>
<comment type="pathway">
    <text evidence="1">Carbohydrate metabolism; D-ribose degradation; D-ribose 5-phosphate from beta-D-ribopyranose: step 1/2.</text>
</comment>
<comment type="subunit">
    <text evidence="1">Homodecamer.</text>
</comment>
<comment type="subcellular location">
    <subcellularLocation>
        <location evidence="1">Cytoplasm</location>
    </subcellularLocation>
</comment>
<comment type="similarity">
    <text evidence="1">Belongs to the RbsD / FucU family. RbsD subfamily.</text>
</comment>
<keyword id="KW-0119">Carbohydrate metabolism</keyword>
<keyword id="KW-0963">Cytoplasm</keyword>
<keyword id="KW-0413">Isomerase</keyword>
<sequence>MKKQGILNSHLAKIFADLGHTDRVVIADCGLPIPDGVKRVDLSLRIGEPSFLEVLDVVESDLVVERITIAEEILTHNSTIADSLKERYTSIDMCSHEDFKREVAKAKVVIRTGEATPYANVILHAGVIF</sequence>
<name>RBSD_EXISA</name>
<accession>C4KZD1</accession>
<evidence type="ECO:0000255" key="1">
    <source>
        <dbReference type="HAMAP-Rule" id="MF_01661"/>
    </source>
</evidence>
<organism>
    <name type="scientific">Exiguobacterium sp. (strain ATCC BAA-1283 / AT1b)</name>
    <dbReference type="NCBI Taxonomy" id="360911"/>
    <lineage>
        <taxon>Bacteria</taxon>
        <taxon>Bacillati</taxon>
        <taxon>Bacillota</taxon>
        <taxon>Bacilli</taxon>
        <taxon>Bacillales</taxon>
        <taxon>Bacillales Family XII. Incertae Sedis</taxon>
        <taxon>Exiguobacterium</taxon>
    </lineage>
</organism>
<dbReference type="EC" id="5.4.99.62" evidence="1"/>
<dbReference type="EMBL" id="CP001615">
    <property type="protein sequence ID" value="ACQ70444.1"/>
    <property type="molecule type" value="Genomic_DNA"/>
</dbReference>
<dbReference type="RefSeq" id="WP_012727563.1">
    <property type="nucleotide sequence ID" value="NC_012673.1"/>
</dbReference>
<dbReference type="SMR" id="C4KZD1"/>
<dbReference type="STRING" id="360911.EAT1b_1518"/>
<dbReference type="KEGG" id="eat:EAT1b_1518"/>
<dbReference type="eggNOG" id="COG1869">
    <property type="taxonomic scope" value="Bacteria"/>
</dbReference>
<dbReference type="HOGENOM" id="CLU_135498_0_0_9"/>
<dbReference type="OrthoDB" id="9805009at2"/>
<dbReference type="UniPathway" id="UPA00916">
    <property type="reaction ID" value="UER00888"/>
</dbReference>
<dbReference type="Proteomes" id="UP000000716">
    <property type="component" value="Chromosome"/>
</dbReference>
<dbReference type="GO" id="GO:0005829">
    <property type="term" value="C:cytosol"/>
    <property type="evidence" value="ECO:0007669"/>
    <property type="project" value="TreeGrafter"/>
</dbReference>
<dbReference type="GO" id="GO:0062193">
    <property type="term" value="F:D-ribose pyranase activity"/>
    <property type="evidence" value="ECO:0007669"/>
    <property type="project" value="UniProtKB-EC"/>
</dbReference>
<dbReference type="GO" id="GO:0016872">
    <property type="term" value="F:intramolecular lyase activity"/>
    <property type="evidence" value="ECO:0007669"/>
    <property type="project" value="UniProtKB-UniRule"/>
</dbReference>
<dbReference type="GO" id="GO:0048029">
    <property type="term" value="F:monosaccharide binding"/>
    <property type="evidence" value="ECO:0007669"/>
    <property type="project" value="InterPro"/>
</dbReference>
<dbReference type="GO" id="GO:0019303">
    <property type="term" value="P:D-ribose catabolic process"/>
    <property type="evidence" value="ECO:0007669"/>
    <property type="project" value="UniProtKB-UniRule"/>
</dbReference>
<dbReference type="Gene3D" id="3.40.1650.10">
    <property type="entry name" value="RbsD-like domain"/>
    <property type="match status" value="1"/>
</dbReference>
<dbReference type="HAMAP" id="MF_01661">
    <property type="entry name" value="D_rib_pyranase"/>
    <property type="match status" value="1"/>
</dbReference>
<dbReference type="InterPro" id="IPR023064">
    <property type="entry name" value="D-ribose_pyranase"/>
</dbReference>
<dbReference type="InterPro" id="IPR023750">
    <property type="entry name" value="RbsD-like_sf"/>
</dbReference>
<dbReference type="InterPro" id="IPR007721">
    <property type="entry name" value="RbsD_FucU"/>
</dbReference>
<dbReference type="NCBIfam" id="NF008761">
    <property type="entry name" value="PRK11797.1"/>
    <property type="match status" value="1"/>
</dbReference>
<dbReference type="PANTHER" id="PTHR37831">
    <property type="entry name" value="D-RIBOSE PYRANASE"/>
    <property type="match status" value="1"/>
</dbReference>
<dbReference type="PANTHER" id="PTHR37831:SF1">
    <property type="entry name" value="D-RIBOSE PYRANASE"/>
    <property type="match status" value="1"/>
</dbReference>
<dbReference type="Pfam" id="PF05025">
    <property type="entry name" value="RbsD_FucU"/>
    <property type="match status" value="1"/>
</dbReference>
<dbReference type="SUPFAM" id="SSF102546">
    <property type="entry name" value="RbsD-like"/>
    <property type="match status" value="1"/>
</dbReference>